<sequence length="250" mass="27114">MGRAPAKRKPSSPPPPPPPGRCHFWLPNKRRHCANTPLPTSQYCGNHLPDSASDAGAPFRRLVPCPVDPSHTVLEENLEAHVGKCPLKKQAAALAAQPFYSKGINSGGGEGGGGVTSAAKRALVHKLTKDELRALIEKIKLAHASAAMAMRDSFLVTDACDNWMRNQVDRKVPYQEKHVTQQASIIGNMEAFGLLQKGGEVAEENGVKNAPAVVEFGAGRGYLTQMLADCYGIRNVFLVERRSYKLKLKI</sequence>
<name>TRM13_ORYSJ</name>
<comment type="function">
    <text evidence="3">tRNA methylase that catalyzes 2'-O-methyladenosine (Am) nucleoside formation on tRNA(Gly)(GCC) in vitro. May 2'-O-methylate cytidine(4) in tRNA(Pro) and tRNA(Gly)(GCC), and adenosine(4) in tRNA(His) (PubMed:28369540). Involved in salt stress tolerance (PubMed:28369540).</text>
</comment>
<comment type="catalytic activity">
    <reaction evidence="6">
        <text>cytidine(4) in tRNA(Pro) + S-adenosyl-L-methionine = 2'-O-methylcytidine(4) in tRNA(Pro) + S-adenosyl-L-homocysteine + H(+)</text>
        <dbReference type="Rhea" id="RHEA:32767"/>
        <dbReference type="Rhea" id="RHEA-COMP:10397"/>
        <dbReference type="Rhea" id="RHEA-COMP:10398"/>
        <dbReference type="ChEBI" id="CHEBI:15378"/>
        <dbReference type="ChEBI" id="CHEBI:57856"/>
        <dbReference type="ChEBI" id="CHEBI:59789"/>
        <dbReference type="ChEBI" id="CHEBI:74495"/>
        <dbReference type="ChEBI" id="CHEBI:82748"/>
        <dbReference type="EC" id="2.1.1.225"/>
    </reaction>
</comment>
<comment type="catalytic activity">
    <reaction evidence="6">
        <text>cytidine(4) in tRNA(Gly)(GCC) + S-adenosyl-L-methionine = 2'-O-methylcytidine(4) in tRNA(Gly)(GCC) + S-adenosyl-L-homocysteine + H(+)</text>
        <dbReference type="Rhea" id="RHEA:43192"/>
        <dbReference type="Rhea" id="RHEA-COMP:10399"/>
        <dbReference type="Rhea" id="RHEA-COMP:10400"/>
        <dbReference type="ChEBI" id="CHEBI:15378"/>
        <dbReference type="ChEBI" id="CHEBI:57856"/>
        <dbReference type="ChEBI" id="CHEBI:59789"/>
        <dbReference type="ChEBI" id="CHEBI:74495"/>
        <dbReference type="ChEBI" id="CHEBI:82748"/>
        <dbReference type="EC" id="2.1.1.225"/>
    </reaction>
</comment>
<comment type="catalytic activity">
    <reaction evidence="6">
        <text>adenosine(4) in tRNA(His) + S-adenosyl-L-methionine = 2'-O-methyladenosine(4) in tRNA(His) + S-adenosyl-L-homocysteine + H(+)</text>
        <dbReference type="Rhea" id="RHEA:43196"/>
        <dbReference type="Rhea" id="RHEA-COMP:10401"/>
        <dbReference type="Rhea" id="RHEA-COMP:10402"/>
        <dbReference type="ChEBI" id="CHEBI:15378"/>
        <dbReference type="ChEBI" id="CHEBI:57856"/>
        <dbReference type="ChEBI" id="CHEBI:59789"/>
        <dbReference type="ChEBI" id="CHEBI:74411"/>
        <dbReference type="ChEBI" id="CHEBI:74477"/>
        <dbReference type="EC" id="2.1.1.225"/>
    </reaction>
</comment>
<comment type="subcellular location">
    <subcellularLocation>
        <location evidence="3">Nucleus</location>
    </subcellularLocation>
    <subcellularLocation>
        <location evidence="6">Cytoplasm</location>
    </subcellularLocation>
</comment>
<comment type="induction">
    <text evidence="3">Induced by salt stress and abscisic acid treatment.</text>
</comment>
<comment type="miscellaneous">
    <text evidence="3">Seedlings subjected to salt stress and abscisic acid (ABA) treatment exhibit a dramatic increase of 2'-O-methyladenosine (Am) nucleoside (PubMed:28369540). Plants over-expressing TRM13 show improved salt stress tolerance, and plant silencing TRM13 display decreased stress tolerance (PubMed:28369540).</text>
</comment>
<comment type="similarity">
    <text evidence="5">Belongs to the methyltransferase TRM13 family.</text>
</comment>
<comment type="sequence caution" evidence="5">
    <conflict type="erroneous gene model prediction">
        <sequence resource="EMBL-CDS" id="AAP46236"/>
    </conflict>
</comment>
<comment type="sequence caution" evidence="5">
    <conflict type="erroneous gene model prediction">
        <sequence resource="EMBL-CDS" id="AAR88577"/>
    </conflict>
</comment>
<feature type="chain" id="PRO_0000441221" description="tRNA:m(4)X modification enzyme TRM13">
    <location>
        <begin position="1"/>
        <end position="250"/>
    </location>
</feature>
<feature type="zinc finger region" description="CHHC U11-48K-type" evidence="1">
    <location>
        <begin position="62"/>
        <end position="89"/>
    </location>
</feature>
<feature type="region of interest" description="Disordered" evidence="2">
    <location>
        <begin position="1"/>
        <end position="20"/>
    </location>
</feature>
<feature type="compositionally biased region" description="Basic residues" evidence="2">
    <location>
        <begin position="1"/>
        <end position="10"/>
    </location>
</feature>
<feature type="compositionally biased region" description="Pro residues" evidence="2">
    <location>
        <begin position="11"/>
        <end position="20"/>
    </location>
</feature>
<feature type="binding site" evidence="1">
    <location>
        <position position="65"/>
    </location>
    <ligand>
        <name>Zn(2+)</name>
        <dbReference type="ChEBI" id="CHEBI:29105"/>
    </ligand>
</feature>
<feature type="binding site" evidence="1">
    <location>
        <position position="71"/>
    </location>
    <ligand>
        <name>Zn(2+)</name>
        <dbReference type="ChEBI" id="CHEBI:29105"/>
    </ligand>
</feature>
<feature type="binding site" evidence="1">
    <location>
        <position position="81"/>
    </location>
    <ligand>
        <name>Zn(2+)</name>
        <dbReference type="ChEBI" id="CHEBI:29105"/>
    </ligand>
</feature>
<feature type="binding site" evidence="1">
    <location>
        <position position="85"/>
    </location>
    <ligand>
        <name>Zn(2+)</name>
        <dbReference type="ChEBI" id="CHEBI:29105"/>
    </ligand>
</feature>
<gene>
    <name evidence="4" type="primary">TRM13</name>
    <name evidence="10" type="ordered locus">Os03g0833200</name>
    <name evidence="9" type="ordered locus">LOC_Os03g61750</name>
    <name evidence="7" type="ORF">OSJNBa0078D06.36</name>
    <name evidence="8" type="ORF">OSJNBa0096I06.32</name>
</gene>
<accession>Q10B19</accession>
<accession>Q75LH5</accession>
<accession>Q7Y148</accession>
<organism>
    <name type="scientific">Oryza sativa subsp. japonica</name>
    <name type="common">Rice</name>
    <dbReference type="NCBI Taxonomy" id="39947"/>
    <lineage>
        <taxon>Eukaryota</taxon>
        <taxon>Viridiplantae</taxon>
        <taxon>Streptophyta</taxon>
        <taxon>Embryophyta</taxon>
        <taxon>Tracheophyta</taxon>
        <taxon>Spermatophyta</taxon>
        <taxon>Magnoliopsida</taxon>
        <taxon>Liliopsida</taxon>
        <taxon>Poales</taxon>
        <taxon>Poaceae</taxon>
        <taxon>BOP clade</taxon>
        <taxon>Oryzoideae</taxon>
        <taxon>Oryzeae</taxon>
        <taxon>Oryzinae</taxon>
        <taxon>Oryza</taxon>
        <taxon>Oryza sativa</taxon>
    </lineage>
</organism>
<keyword id="KW-0963">Cytoplasm</keyword>
<keyword id="KW-0479">Metal-binding</keyword>
<keyword id="KW-0489">Methyltransferase</keyword>
<keyword id="KW-0539">Nucleus</keyword>
<keyword id="KW-1185">Reference proteome</keyword>
<keyword id="KW-0949">S-adenosyl-L-methionine</keyword>
<keyword id="KW-0346">Stress response</keyword>
<keyword id="KW-0808">Transferase</keyword>
<keyword id="KW-0819">tRNA processing</keyword>
<keyword id="KW-0862">Zinc</keyword>
<keyword id="KW-0863">Zinc-finger</keyword>
<evidence type="ECO:0000255" key="1">
    <source>
        <dbReference type="PROSITE-ProRule" id="PRU01141"/>
    </source>
</evidence>
<evidence type="ECO:0000256" key="2">
    <source>
        <dbReference type="SAM" id="MobiDB-lite"/>
    </source>
</evidence>
<evidence type="ECO:0000269" key="3">
    <source>
    </source>
</evidence>
<evidence type="ECO:0000303" key="4">
    <source>
    </source>
</evidence>
<evidence type="ECO:0000305" key="5"/>
<evidence type="ECO:0000305" key="6">
    <source>
    </source>
</evidence>
<evidence type="ECO:0000312" key="7">
    <source>
        <dbReference type="EMBL" id="AAP46236.1"/>
    </source>
</evidence>
<evidence type="ECO:0000312" key="8">
    <source>
        <dbReference type="EMBL" id="AAR88577.1"/>
    </source>
</evidence>
<evidence type="ECO:0000312" key="9">
    <source>
        <dbReference type="EMBL" id="ABF99727.1"/>
    </source>
</evidence>
<evidence type="ECO:0000312" key="10">
    <source>
        <dbReference type="EMBL" id="BAH92428.1"/>
    </source>
</evidence>
<protein>
    <recommendedName>
        <fullName evidence="5">tRNA:m(4)X modification enzyme TRM13</fullName>
        <ecNumber evidence="6">2.1.1.225</ecNumber>
    </recommendedName>
    <alternativeName>
        <fullName evidence="5">tRNA methylase 13</fullName>
        <shortName evidence="4">OsTRM13</shortName>
    </alternativeName>
</protein>
<reference key="1">
    <citation type="journal article" date="2005" name="Genome Res.">
        <title>Sequence, annotation, and analysis of synteny between rice chromosome 3 and diverged grass species.</title>
        <authorList>
            <consortium name="The rice chromosome 3 sequencing consortium"/>
            <person name="Buell C.R."/>
            <person name="Yuan Q."/>
            <person name="Ouyang S."/>
            <person name="Liu J."/>
            <person name="Zhu W."/>
            <person name="Wang A."/>
            <person name="Maiti R."/>
            <person name="Haas B."/>
            <person name="Wortman J."/>
            <person name="Pertea M."/>
            <person name="Jones K.M."/>
            <person name="Kim M."/>
            <person name="Overton L."/>
            <person name="Tsitrin T."/>
            <person name="Fadrosh D."/>
            <person name="Bera J."/>
            <person name="Weaver B."/>
            <person name="Jin S."/>
            <person name="Johri S."/>
            <person name="Reardon M."/>
            <person name="Webb K."/>
            <person name="Hill J."/>
            <person name="Moffat K."/>
            <person name="Tallon L."/>
            <person name="Van Aken S."/>
            <person name="Lewis M."/>
            <person name="Utterback T."/>
            <person name="Feldblyum T."/>
            <person name="Zismann V."/>
            <person name="Iobst S."/>
            <person name="Hsiao J."/>
            <person name="de Vazeille A.R."/>
            <person name="Salzberg S.L."/>
            <person name="White O."/>
            <person name="Fraser C.M."/>
            <person name="Yu Y."/>
            <person name="Kim H."/>
            <person name="Rambo T."/>
            <person name="Currie J."/>
            <person name="Collura K."/>
            <person name="Kernodle-Thompson S."/>
            <person name="Wei F."/>
            <person name="Kudrna K."/>
            <person name="Ammiraju J.S.S."/>
            <person name="Luo M."/>
            <person name="Goicoechea J.L."/>
            <person name="Wing R.A."/>
            <person name="Henry D."/>
            <person name="Oates R."/>
            <person name="Palmer M."/>
            <person name="Pries G."/>
            <person name="Saski C."/>
            <person name="Simmons J."/>
            <person name="Soderlund C."/>
            <person name="Nelson W."/>
            <person name="de la Bastide M."/>
            <person name="Spiegel L."/>
            <person name="Nascimento L."/>
            <person name="Huang E."/>
            <person name="Preston R."/>
            <person name="Zutavern T."/>
            <person name="Palmer L."/>
            <person name="O'Shaughnessy A."/>
            <person name="Dike S."/>
            <person name="McCombie W.R."/>
            <person name="Minx P."/>
            <person name="Cordum H."/>
            <person name="Wilson R."/>
            <person name="Jin W."/>
            <person name="Lee H.R."/>
            <person name="Jiang J."/>
            <person name="Jackson S."/>
        </authorList>
    </citation>
    <scope>NUCLEOTIDE SEQUENCE [LARGE SCALE GENOMIC DNA]</scope>
    <source>
        <strain>cv. Nipponbare</strain>
    </source>
</reference>
<reference key="2">
    <citation type="journal article" date="2005" name="Nature">
        <title>The map-based sequence of the rice genome.</title>
        <authorList>
            <consortium name="International rice genome sequencing project (IRGSP)"/>
        </authorList>
    </citation>
    <scope>NUCLEOTIDE SEQUENCE [LARGE SCALE GENOMIC DNA]</scope>
    <source>
        <strain>cv. Nipponbare</strain>
    </source>
</reference>
<reference key="3">
    <citation type="journal article" date="2008" name="Nucleic Acids Res.">
        <title>The rice annotation project database (RAP-DB): 2008 update.</title>
        <authorList>
            <consortium name="The rice annotation project (RAP)"/>
        </authorList>
    </citation>
    <scope>GENOME REANNOTATION</scope>
    <source>
        <strain>cv. Nipponbare</strain>
    </source>
</reference>
<reference key="4">
    <citation type="journal article" date="2013" name="Rice">
        <title>Improvement of the Oryza sativa Nipponbare reference genome using next generation sequence and optical map data.</title>
        <authorList>
            <person name="Kawahara Y."/>
            <person name="de la Bastide M."/>
            <person name="Hamilton J.P."/>
            <person name="Kanamori H."/>
            <person name="McCombie W.R."/>
            <person name="Ouyang S."/>
            <person name="Schwartz D.C."/>
            <person name="Tanaka T."/>
            <person name="Wu J."/>
            <person name="Zhou S."/>
            <person name="Childs K.L."/>
            <person name="Davidson R.M."/>
            <person name="Lin H."/>
            <person name="Quesada-Ocampo L."/>
            <person name="Vaillancourt B."/>
            <person name="Sakai H."/>
            <person name="Lee S.S."/>
            <person name="Kim J."/>
            <person name="Numa H."/>
            <person name="Itoh T."/>
            <person name="Buell C.R."/>
            <person name="Matsumoto T."/>
        </authorList>
    </citation>
    <scope>GENOME REANNOTATION</scope>
    <source>
        <strain>cv. Nipponbare</strain>
    </source>
</reference>
<reference key="5">
    <citation type="journal article" date="2003" name="Science">
        <title>Collection, mapping, and annotation of over 28,000 cDNA clones from japonica rice.</title>
        <authorList>
            <consortium name="The rice full-length cDNA consortium"/>
        </authorList>
    </citation>
    <scope>NUCLEOTIDE SEQUENCE [LARGE SCALE MRNA]</scope>
    <source>
        <strain>cv. Nipponbare</strain>
    </source>
</reference>
<reference key="6">
    <citation type="journal article" date="2017" name="J. Exp. Bot.">
        <title>The 2'-O-methyladenosine nucleoside modification gene OsTRM13 positively regulates salt stress tolerance in rice.</title>
        <authorList>
            <person name="Wang Y."/>
            <person name="Li D."/>
            <person name="Gao J."/>
            <person name="Li X."/>
            <person name="Zhang R."/>
            <person name="Jin X."/>
            <person name="Hu Z."/>
            <person name="Zheng B."/>
            <person name="Persson S."/>
            <person name="Chen P."/>
        </authorList>
    </citation>
    <scope>FUNCTION</scope>
    <scope>CATALYTIC ACTIVITY</scope>
    <scope>SUBCELLULAR LOCATION</scope>
    <scope>INDUCTION</scope>
</reference>
<dbReference type="EC" id="2.1.1.225" evidence="6"/>
<dbReference type="EMBL" id="AC092557">
    <property type="protein sequence ID" value="AAR88577.1"/>
    <property type="status" value="ALT_SEQ"/>
    <property type="molecule type" value="Genomic_DNA"/>
</dbReference>
<dbReference type="EMBL" id="AC133339">
    <property type="protein sequence ID" value="AAP46236.1"/>
    <property type="status" value="ALT_SEQ"/>
    <property type="molecule type" value="Genomic_DNA"/>
</dbReference>
<dbReference type="EMBL" id="DP000009">
    <property type="protein sequence ID" value="ABF99727.1"/>
    <property type="molecule type" value="Genomic_DNA"/>
</dbReference>
<dbReference type="EMBL" id="AP008209">
    <property type="protein sequence ID" value="BAH92428.1"/>
    <property type="molecule type" value="Genomic_DNA"/>
</dbReference>
<dbReference type="EMBL" id="AP014959">
    <property type="protein sequence ID" value="BAS87224.1"/>
    <property type="molecule type" value="Genomic_DNA"/>
</dbReference>
<dbReference type="EMBL" id="AK102870">
    <property type="protein sequence ID" value="BAG95757.1"/>
    <property type="molecule type" value="mRNA"/>
</dbReference>
<dbReference type="FunCoup" id="Q10B19">
    <property type="interactions" value="9"/>
</dbReference>
<dbReference type="STRING" id="39947.Q10B19"/>
<dbReference type="PaxDb" id="39947-Q10B19"/>
<dbReference type="EnsemblPlants" id="Os03t0833200-01">
    <property type="protein sequence ID" value="Os03t0833200-01"/>
    <property type="gene ID" value="Os03g0833200"/>
</dbReference>
<dbReference type="Gramene" id="Os03t0833200-01">
    <property type="protein sequence ID" value="Os03t0833200-01"/>
    <property type="gene ID" value="Os03g0833200"/>
</dbReference>
<dbReference type="KEGG" id="dosa:Os03g0833200"/>
<dbReference type="eggNOG" id="KOG2811">
    <property type="taxonomic scope" value="Eukaryota"/>
</dbReference>
<dbReference type="HOGENOM" id="CLU_106946_0_0_1"/>
<dbReference type="InParanoid" id="Q10B19"/>
<dbReference type="Proteomes" id="UP000000763">
    <property type="component" value="Chromosome 3"/>
</dbReference>
<dbReference type="Proteomes" id="UP000059680">
    <property type="component" value="Chromosome 3"/>
</dbReference>
<dbReference type="GO" id="GO:0005737">
    <property type="term" value="C:cytoplasm"/>
    <property type="evidence" value="ECO:0000314"/>
    <property type="project" value="UniProtKB"/>
</dbReference>
<dbReference type="GO" id="GO:0005634">
    <property type="term" value="C:nucleus"/>
    <property type="evidence" value="ECO:0000314"/>
    <property type="project" value="UniProtKB"/>
</dbReference>
<dbReference type="GO" id="GO:0106050">
    <property type="term" value="F:tRNA 2'-O-methyltransferase activity"/>
    <property type="evidence" value="ECO:0007669"/>
    <property type="project" value="InterPro"/>
</dbReference>
<dbReference type="GO" id="GO:0008175">
    <property type="term" value="F:tRNA methyltransferase activity"/>
    <property type="evidence" value="ECO:0000314"/>
    <property type="project" value="UniProtKB"/>
</dbReference>
<dbReference type="GO" id="GO:0008270">
    <property type="term" value="F:zinc ion binding"/>
    <property type="evidence" value="ECO:0007669"/>
    <property type="project" value="UniProtKB-KW"/>
</dbReference>
<dbReference type="GO" id="GO:0009651">
    <property type="term" value="P:response to salt stress"/>
    <property type="evidence" value="ECO:0000315"/>
    <property type="project" value="UniProtKB"/>
</dbReference>
<dbReference type="GO" id="GO:0030488">
    <property type="term" value="P:tRNA methylation"/>
    <property type="evidence" value="ECO:0000314"/>
    <property type="project" value="UniProtKB"/>
</dbReference>
<dbReference type="InterPro" id="IPR007871">
    <property type="entry name" value="Methyltransferase_TRM13"/>
</dbReference>
<dbReference type="InterPro" id="IPR029063">
    <property type="entry name" value="SAM-dependent_MTases_sf"/>
</dbReference>
<dbReference type="InterPro" id="IPR039044">
    <property type="entry name" value="Trm13"/>
</dbReference>
<dbReference type="InterPro" id="IPR022776">
    <property type="entry name" value="TRM13/UPF0224_CHHC_Znf_dom"/>
</dbReference>
<dbReference type="InterPro" id="IPR021721">
    <property type="entry name" value="Znf_CCCH-type_TRM13"/>
</dbReference>
<dbReference type="PANTHER" id="PTHR12998">
    <property type="entry name" value="TRNA:M(4)X MODIFICATION ENZYME TRM13 HOMOLOG"/>
    <property type="match status" value="1"/>
</dbReference>
<dbReference type="PANTHER" id="PTHR12998:SF0">
    <property type="entry name" value="TRNA:M(4)X MODIFICATION ENZYME TRM13 HOMOLOG"/>
    <property type="match status" value="1"/>
</dbReference>
<dbReference type="Pfam" id="PF05206">
    <property type="entry name" value="TRM13"/>
    <property type="match status" value="1"/>
</dbReference>
<dbReference type="Pfam" id="PF11722">
    <property type="entry name" value="zf-TRM13_CCCH"/>
    <property type="match status" value="1"/>
</dbReference>
<dbReference type="Pfam" id="PF05253">
    <property type="entry name" value="zf-U11-48K"/>
    <property type="match status" value="1"/>
</dbReference>
<dbReference type="SUPFAM" id="SSF53335">
    <property type="entry name" value="S-adenosyl-L-methionine-dependent methyltransferases"/>
    <property type="match status" value="1"/>
</dbReference>
<dbReference type="PROSITE" id="PS51800">
    <property type="entry name" value="ZF_CHHC_U11_48K"/>
    <property type="match status" value="1"/>
</dbReference>
<proteinExistence type="evidence at protein level"/>